<organism>
    <name type="scientific">Chaetomium globosum (strain ATCC 6205 / CBS 148.51 / DSM 1962 / NBRC 6347 / NRRL 1970)</name>
    <name type="common">Soil fungus</name>
    <dbReference type="NCBI Taxonomy" id="306901"/>
    <lineage>
        <taxon>Eukaryota</taxon>
        <taxon>Fungi</taxon>
        <taxon>Dikarya</taxon>
        <taxon>Ascomycota</taxon>
        <taxon>Pezizomycotina</taxon>
        <taxon>Sordariomycetes</taxon>
        <taxon>Sordariomycetidae</taxon>
        <taxon>Sordariales</taxon>
        <taxon>Chaetomiaceae</taxon>
        <taxon>Chaetomium</taxon>
    </lineage>
</organism>
<name>CIAO1_CHAGB</name>
<proteinExistence type="inferred from homology"/>
<protein>
    <recommendedName>
        <fullName evidence="1">Probable cytosolic iron-sulfur protein assembly protein 1</fullName>
    </recommendedName>
</protein>
<sequence>MPPPTTPTPNPSIPQKATLTPLPPFQPDLYQRAWSSIPHPTLPLLATGHAKSVTVFSLATLSKHSALTGGHARSVRTVAWQPARGGGTGGGSGGKRLGLVTGSFDATAGLWSFEGDADAAAGGGGGGLEREVRMGGGGGGGGESEEEEEVREWEFNLVLEGHENEVKSLAFSPGGQYLATSSRDKSVWIWEDVSSGQGGDDEDEWETVAVLSEHDGDVKAVAWCPSNLPNARAGVGRQHNSSEVLASASYDDTVRVWREDADGEWVCVAVLEGHGGTVWGLQWEGKERQDGRFPRLMTFSAGRVRSRVWTLRVSGFGGVPSTMRRSLREEWDCTAVLPKVHTRDVYSVSWSADTGLVASTGSDGIIAVYAEESAPEDVAKSGVEGGAENGTSGPKSNWKVLGTITRAHGPYEVNHITWCKRFDPGAEHKGKEEMLVTTGDDGVVRPWQVRIS</sequence>
<accession>Q2GP45</accession>
<gene>
    <name evidence="1" type="primary">CIA1</name>
    <name type="ORF">CHGG_10259</name>
</gene>
<comment type="function">
    <text evidence="1">Essential component of the cytosolic iron-sulfur (Fe/S) protein assembly machinery. Required for the maturation of extramitochondrial Fe/S proteins.</text>
</comment>
<comment type="similarity">
    <text evidence="1">Belongs to the WD repeat CIA1 family.</text>
</comment>
<comment type="sequence caution" evidence="3">
    <conflict type="erroneous gene model prediction">
        <sequence resource="EMBL-CDS" id="EAQ83855"/>
    </conflict>
</comment>
<feature type="chain" id="PRO_0000382511" description="Probable cytosolic iron-sulfur protein assembly protein 1">
    <location>
        <begin position="1"/>
        <end position="452"/>
    </location>
</feature>
<feature type="repeat" description="WD 1">
    <location>
        <begin position="70"/>
        <end position="121"/>
    </location>
</feature>
<feature type="repeat" description="WD 2">
    <location>
        <begin position="161"/>
        <end position="200"/>
    </location>
</feature>
<feature type="repeat" description="WD 3">
    <location>
        <begin position="213"/>
        <end position="267"/>
    </location>
</feature>
<feature type="repeat" description="WD 4">
    <location>
        <begin position="273"/>
        <end position="319"/>
    </location>
</feature>
<feature type="repeat" description="WD 5">
    <location>
        <begin position="340"/>
        <end position="379"/>
    </location>
</feature>
<feature type="repeat" description="WD 6">
    <location>
        <begin position="411"/>
        <end position="452"/>
    </location>
</feature>
<feature type="region of interest" description="Disordered" evidence="2">
    <location>
        <begin position="1"/>
        <end position="24"/>
    </location>
</feature>
<feature type="compositionally biased region" description="Pro residues" evidence="2">
    <location>
        <begin position="1"/>
        <end position="12"/>
    </location>
</feature>
<keyword id="KW-1185">Reference proteome</keyword>
<keyword id="KW-0677">Repeat</keyword>
<keyword id="KW-0853">WD repeat</keyword>
<dbReference type="EMBL" id="CH408035">
    <property type="protein sequence ID" value="EAQ83855.1"/>
    <property type="status" value="ALT_SEQ"/>
    <property type="molecule type" value="Genomic_DNA"/>
</dbReference>
<dbReference type="RefSeq" id="XP_001228186.1">
    <property type="nucleotide sequence ID" value="XM_001228185.1"/>
</dbReference>
<dbReference type="SMR" id="Q2GP45"/>
<dbReference type="STRING" id="306901.Q2GP45"/>
<dbReference type="GeneID" id="4396999"/>
<dbReference type="VEuPathDB" id="FungiDB:CHGG_10259"/>
<dbReference type="HOGENOM" id="CLU_000288_57_8_1"/>
<dbReference type="InParanoid" id="Q2GP45"/>
<dbReference type="OrthoDB" id="284782at2759"/>
<dbReference type="Proteomes" id="UP000001056">
    <property type="component" value="Unassembled WGS sequence"/>
</dbReference>
<dbReference type="GO" id="GO:0097361">
    <property type="term" value="C:cytosolic [4Fe-4S] assembly targeting complex"/>
    <property type="evidence" value="ECO:0007669"/>
    <property type="project" value="InterPro"/>
</dbReference>
<dbReference type="GO" id="GO:0016226">
    <property type="term" value="P:iron-sulfur cluster assembly"/>
    <property type="evidence" value="ECO:0007669"/>
    <property type="project" value="UniProtKB-UniRule"/>
</dbReference>
<dbReference type="Gene3D" id="2.130.10.10">
    <property type="entry name" value="YVTN repeat-like/Quinoprotein amine dehydrogenase"/>
    <property type="match status" value="1"/>
</dbReference>
<dbReference type="HAMAP" id="MF_03037">
    <property type="entry name" value="ciao1"/>
    <property type="match status" value="1"/>
</dbReference>
<dbReference type="InterPro" id="IPR028608">
    <property type="entry name" value="CIAO1/Cia1"/>
</dbReference>
<dbReference type="InterPro" id="IPR015943">
    <property type="entry name" value="WD40/YVTN_repeat-like_dom_sf"/>
</dbReference>
<dbReference type="InterPro" id="IPR036322">
    <property type="entry name" value="WD40_repeat_dom_sf"/>
</dbReference>
<dbReference type="InterPro" id="IPR001680">
    <property type="entry name" value="WD40_rpt"/>
</dbReference>
<dbReference type="PANTHER" id="PTHR19920:SF0">
    <property type="entry name" value="CYTOSOLIC IRON-SULFUR PROTEIN ASSEMBLY PROTEIN CIAO1-RELATED"/>
    <property type="match status" value="1"/>
</dbReference>
<dbReference type="PANTHER" id="PTHR19920">
    <property type="entry name" value="WD40 PROTEIN CIAO1"/>
    <property type="match status" value="1"/>
</dbReference>
<dbReference type="Pfam" id="PF00400">
    <property type="entry name" value="WD40"/>
    <property type="match status" value="3"/>
</dbReference>
<dbReference type="SMART" id="SM00320">
    <property type="entry name" value="WD40"/>
    <property type="match status" value="6"/>
</dbReference>
<dbReference type="SUPFAM" id="SSF50978">
    <property type="entry name" value="WD40 repeat-like"/>
    <property type="match status" value="1"/>
</dbReference>
<dbReference type="PROSITE" id="PS50082">
    <property type="entry name" value="WD_REPEATS_2"/>
    <property type="match status" value="1"/>
</dbReference>
<dbReference type="PROSITE" id="PS50294">
    <property type="entry name" value="WD_REPEATS_REGION"/>
    <property type="match status" value="1"/>
</dbReference>
<reference key="1">
    <citation type="journal article" date="2015" name="Genome Announc.">
        <title>Draft genome sequence of the cellulolytic fungus Chaetomium globosum.</title>
        <authorList>
            <person name="Cuomo C.A."/>
            <person name="Untereiner W.A."/>
            <person name="Ma L.-J."/>
            <person name="Grabherr M."/>
            <person name="Birren B.W."/>
        </authorList>
    </citation>
    <scope>NUCLEOTIDE SEQUENCE [LARGE SCALE GENOMIC DNA]</scope>
    <source>
        <strain>ATCC 6205 / CBS 148.51 / DSM 1962 / NBRC 6347 / NRRL 1970</strain>
    </source>
</reference>
<evidence type="ECO:0000255" key="1">
    <source>
        <dbReference type="HAMAP-Rule" id="MF_03037"/>
    </source>
</evidence>
<evidence type="ECO:0000256" key="2">
    <source>
        <dbReference type="SAM" id="MobiDB-lite"/>
    </source>
</evidence>
<evidence type="ECO:0000305" key="3"/>